<keyword id="KW-0488">Methylation</keyword>
<keyword id="KW-0687">Ribonucleoprotein</keyword>
<keyword id="KW-0689">Ribosomal protein</keyword>
<keyword id="KW-0694">RNA-binding</keyword>
<keyword id="KW-0699">rRNA-binding</keyword>
<dbReference type="EMBL" id="AM920689">
    <property type="protein sequence ID" value="CAP52835.1"/>
    <property type="molecule type" value="Genomic_DNA"/>
</dbReference>
<dbReference type="SMR" id="B0RU93"/>
<dbReference type="KEGG" id="xca:xcc-b100_3470"/>
<dbReference type="HOGENOM" id="CLU_074237_2_0_6"/>
<dbReference type="Proteomes" id="UP000001188">
    <property type="component" value="Chromosome"/>
</dbReference>
<dbReference type="GO" id="GO:0022625">
    <property type="term" value="C:cytosolic large ribosomal subunit"/>
    <property type="evidence" value="ECO:0007669"/>
    <property type="project" value="TreeGrafter"/>
</dbReference>
<dbReference type="GO" id="GO:0070180">
    <property type="term" value="F:large ribosomal subunit rRNA binding"/>
    <property type="evidence" value="ECO:0007669"/>
    <property type="project" value="UniProtKB-UniRule"/>
</dbReference>
<dbReference type="GO" id="GO:0003735">
    <property type="term" value="F:structural constituent of ribosome"/>
    <property type="evidence" value="ECO:0007669"/>
    <property type="project" value="InterPro"/>
</dbReference>
<dbReference type="GO" id="GO:0006412">
    <property type="term" value="P:translation"/>
    <property type="evidence" value="ECO:0007669"/>
    <property type="project" value="UniProtKB-UniRule"/>
</dbReference>
<dbReference type="CDD" id="cd00349">
    <property type="entry name" value="Ribosomal_L11"/>
    <property type="match status" value="1"/>
</dbReference>
<dbReference type="FunFam" id="1.10.10.250:FF:000001">
    <property type="entry name" value="50S ribosomal protein L11"/>
    <property type="match status" value="1"/>
</dbReference>
<dbReference type="FunFam" id="3.30.1550.10:FF:000001">
    <property type="entry name" value="50S ribosomal protein L11"/>
    <property type="match status" value="1"/>
</dbReference>
<dbReference type="Gene3D" id="1.10.10.250">
    <property type="entry name" value="Ribosomal protein L11, C-terminal domain"/>
    <property type="match status" value="1"/>
</dbReference>
<dbReference type="Gene3D" id="3.30.1550.10">
    <property type="entry name" value="Ribosomal protein L11/L12, N-terminal domain"/>
    <property type="match status" value="1"/>
</dbReference>
<dbReference type="HAMAP" id="MF_00736">
    <property type="entry name" value="Ribosomal_uL11"/>
    <property type="match status" value="1"/>
</dbReference>
<dbReference type="InterPro" id="IPR000911">
    <property type="entry name" value="Ribosomal_uL11"/>
</dbReference>
<dbReference type="InterPro" id="IPR006519">
    <property type="entry name" value="Ribosomal_uL11_bac-typ"/>
</dbReference>
<dbReference type="InterPro" id="IPR020783">
    <property type="entry name" value="Ribosomal_uL11_C"/>
</dbReference>
<dbReference type="InterPro" id="IPR036769">
    <property type="entry name" value="Ribosomal_uL11_C_sf"/>
</dbReference>
<dbReference type="InterPro" id="IPR020785">
    <property type="entry name" value="Ribosomal_uL11_CS"/>
</dbReference>
<dbReference type="InterPro" id="IPR020784">
    <property type="entry name" value="Ribosomal_uL11_N"/>
</dbReference>
<dbReference type="InterPro" id="IPR036796">
    <property type="entry name" value="Ribosomal_uL11_N_sf"/>
</dbReference>
<dbReference type="NCBIfam" id="TIGR01632">
    <property type="entry name" value="L11_bact"/>
    <property type="match status" value="1"/>
</dbReference>
<dbReference type="PANTHER" id="PTHR11661">
    <property type="entry name" value="60S RIBOSOMAL PROTEIN L12"/>
    <property type="match status" value="1"/>
</dbReference>
<dbReference type="PANTHER" id="PTHR11661:SF1">
    <property type="entry name" value="LARGE RIBOSOMAL SUBUNIT PROTEIN UL11M"/>
    <property type="match status" value="1"/>
</dbReference>
<dbReference type="Pfam" id="PF00298">
    <property type="entry name" value="Ribosomal_L11"/>
    <property type="match status" value="1"/>
</dbReference>
<dbReference type="Pfam" id="PF03946">
    <property type="entry name" value="Ribosomal_L11_N"/>
    <property type="match status" value="1"/>
</dbReference>
<dbReference type="SMART" id="SM00649">
    <property type="entry name" value="RL11"/>
    <property type="match status" value="1"/>
</dbReference>
<dbReference type="SUPFAM" id="SSF54747">
    <property type="entry name" value="Ribosomal L11/L12e N-terminal domain"/>
    <property type="match status" value="1"/>
</dbReference>
<dbReference type="SUPFAM" id="SSF46906">
    <property type="entry name" value="Ribosomal protein L11, C-terminal domain"/>
    <property type="match status" value="1"/>
</dbReference>
<dbReference type="PROSITE" id="PS00359">
    <property type="entry name" value="RIBOSOMAL_L11"/>
    <property type="match status" value="1"/>
</dbReference>
<gene>
    <name evidence="1" type="primary">rplK</name>
    <name type="ordered locus">xcc-b100_3470</name>
</gene>
<accession>B0RU93</accession>
<name>RL11_XANCB</name>
<proteinExistence type="inferred from homology"/>
<reference key="1">
    <citation type="journal article" date="2008" name="J. Biotechnol.">
        <title>The genome of Xanthomonas campestris pv. campestris B100 and its use for the reconstruction of metabolic pathways involved in xanthan biosynthesis.</title>
        <authorList>
            <person name="Vorhoelter F.-J."/>
            <person name="Schneiker S."/>
            <person name="Goesmann A."/>
            <person name="Krause L."/>
            <person name="Bekel T."/>
            <person name="Kaiser O."/>
            <person name="Linke B."/>
            <person name="Patschkowski T."/>
            <person name="Rueckert C."/>
            <person name="Schmid J."/>
            <person name="Sidhu V.K."/>
            <person name="Sieber V."/>
            <person name="Tauch A."/>
            <person name="Watt S.A."/>
            <person name="Weisshaar B."/>
            <person name="Becker A."/>
            <person name="Niehaus K."/>
            <person name="Puehler A."/>
        </authorList>
    </citation>
    <scope>NUCLEOTIDE SEQUENCE [LARGE SCALE GENOMIC DNA]</scope>
    <source>
        <strain>B100</strain>
    </source>
</reference>
<feature type="chain" id="PRO_1000195747" description="Large ribosomal subunit protein uL11">
    <location>
        <begin position="1"/>
        <end position="142"/>
    </location>
</feature>
<organism>
    <name type="scientific">Xanthomonas campestris pv. campestris (strain B100)</name>
    <dbReference type="NCBI Taxonomy" id="509169"/>
    <lineage>
        <taxon>Bacteria</taxon>
        <taxon>Pseudomonadati</taxon>
        <taxon>Pseudomonadota</taxon>
        <taxon>Gammaproteobacteria</taxon>
        <taxon>Lysobacterales</taxon>
        <taxon>Lysobacteraceae</taxon>
        <taxon>Xanthomonas</taxon>
    </lineage>
</organism>
<evidence type="ECO:0000255" key="1">
    <source>
        <dbReference type="HAMAP-Rule" id="MF_00736"/>
    </source>
</evidence>
<evidence type="ECO:0000305" key="2"/>
<protein>
    <recommendedName>
        <fullName evidence="1">Large ribosomal subunit protein uL11</fullName>
    </recommendedName>
    <alternativeName>
        <fullName evidence="2">50S ribosomal protein L11</fullName>
    </alternativeName>
</protein>
<comment type="function">
    <text evidence="1">Forms part of the ribosomal stalk which helps the ribosome interact with GTP-bound translation factors.</text>
</comment>
<comment type="subunit">
    <text evidence="1">Part of the ribosomal stalk of the 50S ribosomal subunit. Interacts with L10 and the large rRNA to form the base of the stalk. L10 forms an elongated spine to which L12 dimers bind in a sequential fashion forming a multimeric L10(L12)X complex.</text>
</comment>
<comment type="PTM">
    <text evidence="1">One or more lysine residues are methylated.</text>
</comment>
<comment type="similarity">
    <text evidence="1">Belongs to the universal ribosomal protein uL11 family.</text>
</comment>
<sequence>MAKKVVALIKLQVKAGQANPAPPVGPALGQRGLNIMEFCKAFNAATSKLEPGLPTPVIITAYSDRTFTFITKSTPASVLLKKAAGVSSGSKRPNTDKVGKVTRKQLEEIAKVKEADLTAAELEAAVRTIAGSARSMGLTVEG</sequence>